<reference key="1">
    <citation type="journal article" date="1999" name="Nature">
        <title>Sequence and analysis of chromosome 4 of the plant Arabidopsis thaliana.</title>
        <authorList>
            <person name="Mayer K.F.X."/>
            <person name="Schueller C."/>
            <person name="Wambutt R."/>
            <person name="Murphy G."/>
            <person name="Volckaert G."/>
            <person name="Pohl T."/>
            <person name="Duesterhoeft A."/>
            <person name="Stiekema W."/>
            <person name="Entian K.-D."/>
            <person name="Terryn N."/>
            <person name="Harris B."/>
            <person name="Ansorge W."/>
            <person name="Brandt P."/>
            <person name="Grivell L.A."/>
            <person name="Rieger M."/>
            <person name="Weichselgartner M."/>
            <person name="de Simone V."/>
            <person name="Obermaier B."/>
            <person name="Mache R."/>
            <person name="Mueller M."/>
            <person name="Kreis M."/>
            <person name="Delseny M."/>
            <person name="Puigdomenech P."/>
            <person name="Watson M."/>
            <person name="Schmidtheini T."/>
            <person name="Reichert B."/>
            <person name="Portetelle D."/>
            <person name="Perez-Alonso M."/>
            <person name="Boutry M."/>
            <person name="Bancroft I."/>
            <person name="Vos P."/>
            <person name="Hoheisel J."/>
            <person name="Zimmermann W."/>
            <person name="Wedler H."/>
            <person name="Ridley P."/>
            <person name="Langham S.-A."/>
            <person name="McCullagh B."/>
            <person name="Bilham L."/>
            <person name="Robben J."/>
            <person name="van der Schueren J."/>
            <person name="Grymonprez B."/>
            <person name="Chuang Y.-J."/>
            <person name="Vandenbussche F."/>
            <person name="Braeken M."/>
            <person name="Weltjens I."/>
            <person name="Voet M."/>
            <person name="Bastiaens I."/>
            <person name="Aert R."/>
            <person name="Defoor E."/>
            <person name="Weitzenegger T."/>
            <person name="Bothe G."/>
            <person name="Ramsperger U."/>
            <person name="Hilbert H."/>
            <person name="Braun M."/>
            <person name="Holzer E."/>
            <person name="Brandt A."/>
            <person name="Peters S."/>
            <person name="van Staveren M."/>
            <person name="Dirkse W."/>
            <person name="Mooijman P."/>
            <person name="Klein Lankhorst R."/>
            <person name="Rose M."/>
            <person name="Hauf J."/>
            <person name="Koetter P."/>
            <person name="Berneiser S."/>
            <person name="Hempel S."/>
            <person name="Feldpausch M."/>
            <person name="Lamberth S."/>
            <person name="Van den Daele H."/>
            <person name="De Keyser A."/>
            <person name="Buysshaert C."/>
            <person name="Gielen J."/>
            <person name="Villarroel R."/>
            <person name="De Clercq R."/>
            <person name="van Montagu M."/>
            <person name="Rogers J."/>
            <person name="Cronin A."/>
            <person name="Quail M.A."/>
            <person name="Bray-Allen S."/>
            <person name="Clark L."/>
            <person name="Doggett J."/>
            <person name="Hall S."/>
            <person name="Kay M."/>
            <person name="Lennard N."/>
            <person name="McLay K."/>
            <person name="Mayes R."/>
            <person name="Pettett A."/>
            <person name="Rajandream M.A."/>
            <person name="Lyne M."/>
            <person name="Benes V."/>
            <person name="Rechmann S."/>
            <person name="Borkova D."/>
            <person name="Bloecker H."/>
            <person name="Scharfe M."/>
            <person name="Grimm M."/>
            <person name="Loehnert T.-H."/>
            <person name="Dose S."/>
            <person name="de Haan M."/>
            <person name="Maarse A.C."/>
            <person name="Schaefer M."/>
            <person name="Mueller-Auer S."/>
            <person name="Gabel C."/>
            <person name="Fuchs M."/>
            <person name="Fartmann B."/>
            <person name="Granderath K."/>
            <person name="Dauner D."/>
            <person name="Herzl A."/>
            <person name="Neumann S."/>
            <person name="Argiriou A."/>
            <person name="Vitale D."/>
            <person name="Liguori R."/>
            <person name="Piravandi E."/>
            <person name="Massenet O."/>
            <person name="Quigley F."/>
            <person name="Clabauld G."/>
            <person name="Muendlein A."/>
            <person name="Felber R."/>
            <person name="Schnabl S."/>
            <person name="Hiller R."/>
            <person name="Schmidt W."/>
            <person name="Lecharny A."/>
            <person name="Aubourg S."/>
            <person name="Chefdor F."/>
            <person name="Cooke R."/>
            <person name="Berger C."/>
            <person name="Monfort A."/>
            <person name="Casacuberta E."/>
            <person name="Gibbons T."/>
            <person name="Weber N."/>
            <person name="Vandenbol M."/>
            <person name="Bargues M."/>
            <person name="Terol J."/>
            <person name="Torres A."/>
            <person name="Perez-Perez A."/>
            <person name="Purnelle B."/>
            <person name="Bent E."/>
            <person name="Johnson S."/>
            <person name="Tacon D."/>
            <person name="Jesse T."/>
            <person name="Heijnen L."/>
            <person name="Schwarz S."/>
            <person name="Scholler P."/>
            <person name="Heber S."/>
            <person name="Francs P."/>
            <person name="Bielke C."/>
            <person name="Frishman D."/>
            <person name="Haase D."/>
            <person name="Lemcke K."/>
            <person name="Mewes H.-W."/>
            <person name="Stocker S."/>
            <person name="Zaccaria P."/>
            <person name="Bevan M."/>
            <person name="Wilson R.K."/>
            <person name="de la Bastide M."/>
            <person name="Habermann K."/>
            <person name="Parnell L."/>
            <person name="Dedhia N."/>
            <person name="Gnoj L."/>
            <person name="Schutz K."/>
            <person name="Huang E."/>
            <person name="Spiegel L."/>
            <person name="Sekhon M."/>
            <person name="Murray J."/>
            <person name="Sheet P."/>
            <person name="Cordes M."/>
            <person name="Abu-Threideh J."/>
            <person name="Stoneking T."/>
            <person name="Kalicki J."/>
            <person name="Graves T."/>
            <person name="Harmon G."/>
            <person name="Edwards J."/>
            <person name="Latreille P."/>
            <person name="Courtney L."/>
            <person name="Cloud J."/>
            <person name="Abbott A."/>
            <person name="Scott K."/>
            <person name="Johnson D."/>
            <person name="Minx P."/>
            <person name="Bentley D."/>
            <person name="Fulton B."/>
            <person name="Miller N."/>
            <person name="Greco T."/>
            <person name="Kemp K."/>
            <person name="Kramer J."/>
            <person name="Fulton L."/>
            <person name="Mardis E."/>
            <person name="Dante M."/>
            <person name="Pepin K."/>
            <person name="Hillier L.W."/>
            <person name="Nelson J."/>
            <person name="Spieth J."/>
            <person name="Ryan E."/>
            <person name="Andrews S."/>
            <person name="Geisel C."/>
            <person name="Layman D."/>
            <person name="Du H."/>
            <person name="Ali J."/>
            <person name="Berghoff A."/>
            <person name="Jones K."/>
            <person name="Drone K."/>
            <person name="Cotton M."/>
            <person name="Joshu C."/>
            <person name="Antonoiu B."/>
            <person name="Zidanic M."/>
            <person name="Strong C."/>
            <person name="Sun H."/>
            <person name="Lamar B."/>
            <person name="Yordan C."/>
            <person name="Ma P."/>
            <person name="Zhong J."/>
            <person name="Preston R."/>
            <person name="Vil D."/>
            <person name="Shekher M."/>
            <person name="Matero A."/>
            <person name="Shah R."/>
            <person name="Swaby I.K."/>
            <person name="O'Shaughnessy A."/>
            <person name="Rodriguez M."/>
            <person name="Hoffman J."/>
            <person name="Till S."/>
            <person name="Granat S."/>
            <person name="Shohdy N."/>
            <person name="Hasegawa A."/>
            <person name="Hameed A."/>
            <person name="Lodhi M."/>
            <person name="Johnson A."/>
            <person name="Chen E."/>
            <person name="Marra M.A."/>
            <person name="Martienssen R."/>
            <person name="McCombie W.R."/>
        </authorList>
    </citation>
    <scope>NUCLEOTIDE SEQUENCE [LARGE SCALE GENOMIC DNA]</scope>
    <source>
        <strain>cv. Columbia</strain>
    </source>
</reference>
<reference key="2">
    <citation type="journal article" date="2017" name="Plant J.">
        <title>Araport11: a complete reannotation of the Arabidopsis thaliana reference genome.</title>
        <authorList>
            <person name="Cheng C.Y."/>
            <person name="Krishnakumar V."/>
            <person name="Chan A.P."/>
            <person name="Thibaud-Nissen F."/>
            <person name="Schobel S."/>
            <person name="Town C.D."/>
        </authorList>
    </citation>
    <scope>GENOME REANNOTATION</scope>
    <source>
        <strain>cv. Columbia</strain>
    </source>
</reference>
<reference key="3">
    <citation type="journal article" date="2003" name="Plant Physiol.">
        <title>Identification of glycosylphosphatidylinositol-anchored proteins in Arabidopsis. A proteomic and genomic analysis.</title>
        <authorList>
            <person name="Borner G.H.H."/>
            <person name="Lilley K.S."/>
            <person name="Stevens T.J."/>
            <person name="Dupree P."/>
        </authorList>
    </citation>
    <scope>GENE FAMILY</scope>
    <source>
        <strain>cv. Columbia</strain>
    </source>
</reference>
<reference key="4">
    <citation type="journal article" date="2009" name="Biosci. Biotechnol. Biochem.">
        <title>Genome-wide identification, structure and expression studies, and mutant collection of 22 early nodulin-like protein genes in Arabidopsis.</title>
        <authorList>
            <person name="Mashiguchi K."/>
            <person name="Asami T."/>
            <person name="Suzuki Y."/>
        </authorList>
    </citation>
    <scope>TISSUE SPECIFICITY</scope>
    <scope>GENE FAMILY</scope>
    <scope>NOMENCLATURE</scope>
    <source>
        <strain>cv. Columbia</strain>
    </source>
</reference>
<reference key="5">
    <citation type="journal article" date="2014" name="Plant Cell Physiol.">
        <title>Emerging functions of nodulin-like proteins in non-nodulating plant species.</title>
        <authorList>
            <person name="Denance N."/>
            <person name="Szurek B."/>
            <person name="Noel L.D."/>
        </authorList>
    </citation>
    <scope>REVIEW ON NODULIN-LIKE PROTEINS</scope>
</reference>
<keyword id="KW-1003">Cell membrane</keyword>
<keyword id="KW-1015">Disulfide bond</keyword>
<keyword id="KW-0325">Glycoprotein</keyword>
<keyword id="KW-0336">GPI-anchor</keyword>
<keyword id="KW-0449">Lipoprotein</keyword>
<keyword id="KW-0472">Membrane</keyword>
<keyword id="KW-1185">Reference proteome</keyword>
<keyword id="KW-0732">Signal</keyword>
<protein>
    <recommendedName>
        <fullName evidence="6">Early nodulin-like protein 3</fullName>
        <shortName evidence="6">AtENODL3</shortName>
    </recommendedName>
    <alternativeName>
        <fullName evidence="8">Phytocyanin-like protein ENODL3</fullName>
    </alternativeName>
</protein>
<gene>
    <name evidence="6" type="primary">ENODL3</name>
    <name evidence="6" type="synonym">EN3</name>
    <name evidence="9" type="ordered locus">At4g28365</name>
    <name evidence="10" type="ORF">F20O9.30</name>
</gene>
<sequence>MGLVMRFDLYLMFVMLMGLGFTISNGYKFYVGGKDGWVPTPSEDYSHWSHRNRFQVNDTLHFKYAKGKDSVLEVTEQEYNTCNTTHPLTSLSDGDSLFLLSHSGSYFFISGNSQNCLKGQKLAVKVLSTVHHSHSPRHTSPSPSPVHQELSSPGPSPGVEPSSDSNSRVPAPGPATAPNSAGLVGPGMVVLVIMISSLF</sequence>
<feature type="signal peptide" evidence="1">
    <location>
        <begin position="1"/>
        <end position="23"/>
    </location>
</feature>
<feature type="chain" id="PRO_0000457731" description="Early nodulin-like protein 3">
    <location>
        <begin position="24"/>
        <end position="179"/>
    </location>
</feature>
<feature type="propeptide" id="PRO_0000457732" description="Removed in mature form" evidence="1">
    <location>
        <begin position="180"/>
        <end position="199"/>
    </location>
</feature>
<feature type="domain" description="Phytocyanin" evidence="3">
    <location>
        <begin position="27"/>
        <end position="128"/>
    </location>
</feature>
<feature type="region of interest" description="Disordered" evidence="4">
    <location>
        <begin position="130"/>
        <end position="180"/>
    </location>
</feature>
<feature type="compositionally biased region" description="Low complexity" evidence="4">
    <location>
        <begin position="138"/>
        <end position="165"/>
    </location>
</feature>
<feature type="lipid moiety-binding region" description="GPI-anchor amidated asparagine" evidence="1">
    <location>
        <position position="179"/>
    </location>
</feature>
<feature type="glycosylation site" description="N-linked (GlcNAc...) asparagine" evidence="2">
    <location>
        <position position="57"/>
    </location>
</feature>
<feature type="glycosylation site" description="N-linked (GlcNAc...) asparagine" evidence="2">
    <location>
        <position position="83"/>
    </location>
</feature>
<feature type="disulfide bond" evidence="3">
    <location>
        <begin position="82"/>
        <end position="116"/>
    </location>
</feature>
<dbReference type="EMBL" id="AL021749">
    <property type="protein sequence ID" value="CAA16874.2"/>
    <property type="status" value="ALT_SEQ"/>
    <property type="molecule type" value="Genomic_DNA"/>
</dbReference>
<dbReference type="EMBL" id="AL161572">
    <property type="protein sequence ID" value="CAB79638.1"/>
    <property type="status" value="ALT_SEQ"/>
    <property type="molecule type" value="Genomic_DNA"/>
</dbReference>
<dbReference type="EMBL" id="CP002687">
    <property type="protein sequence ID" value="AEE85474.1"/>
    <property type="molecule type" value="Genomic_DNA"/>
</dbReference>
<dbReference type="PIR" id="C85330">
    <property type="entry name" value="C85330"/>
</dbReference>
<dbReference type="RefSeq" id="NP_567806.1">
    <property type="nucleotide sequence ID" value="NM_118977.1"/>
</dbReference>
<dbReference type="SMR" id="F4JL85"/>
<dbReference type="FunCoup" id="F4JL85">
    <property type="interactions" value="68"/>
</dbReference>
<dbReference type="STRING" id="3702.F4JL85"/>
<dbReference type="GlyGen" id="F4JL85">
    <property type="glycosylation" value="3 sites"/>
</dbReference>
<dbReference type="PaxDb" id="3702-AT4G28365.1"/>
<dbReference type="ProteomicsDB" id="205881"/>
<dbReference type="EnsemblPlants" id="AT4G28365.1">
    <property type="protein sequence ID" value="AT4G28365.1"/>
    <property type="gene ID" value="AT4G28365"/>
</dbReference>
<dbReference type="GeneID" id="828952"/>
<dbReference type="Gramene" id="AT4G28365.1">
    <property type="protein sequence ID" value="AT4G28365.1"/>
    <property type="gene ID" value="AT4G28365"/>
</dbReference>
<dbReference type="KEGG" id="ath:AT4G28365"/>
<dbReference type="Araport" id="AT4G28365"/>
<dbReference type="TAIR" id="AT4G28365">
    <property type="gene designation" value="ENODL3"/>
</dbReference>
<dbReference type="HOGENOM" id="CLU_058719_1_0_1"/>
<dbReference type="InParanoid" id="F4JL85"/>
<dbReference type="OMA" id="YFSCNTK"/>
<dbReference type="OrthoDB" id="2015640at2759"/>
<dbReference type="PhylomeDB" id="F4JL85"/>
<dbReference type="PRO" id="PR:F4JL85"/>
<dbReference type="Proteomes" id="UP000006548">
    <property type="component" value="Chromosome 4"/>
</dbReference>
<dbReference type="ExpressionAtlas" id="F4JL85">
    <property type="expression patterns" value="baseline and differential"/>
</dbReference>
<dbReference type="GO" id="GO:0005886">
    <property type="term" value="C:plasma membrane"/>
    <property type="evidence" value="ECO:0007669"/>
    <property type="project" value="UniProtKB-SubCell"/>
</dbReference>
<dbReference type="GO" id="GO:0098552">
    <property type="term" value="C:side of membrane"/>
    <property type="evidence" value="ECO:0007669"/>
    <property type="project" value="UniProtKB-KW"/>
</dbReference>
<dbReference type="GO" id="GO:0009055">
    <property type="term" value="F:electron transfer activity"/>
    <property type="evidence" value="ECO:0007669"/>
    <property type="project" value="InterPro"/>
</dbReference>
<dbReference type="CDD" id="cd11019">
    <property type="entry name" value="OsENODL1_like"/>
    <property type="match status" value="1"/>
</dbReference>
<dbReference type="FunFam" id="2.60.40.420:FF:000010">
    <property type="entry name" value="Early nodulin-like protein 1"/>
    <property type="match status" value="1"/>
</dbReference>
<dbReference type="Gene3D" id="2.60.40.420">
    <property type="entry name" value="Cupredoxins - blue copper proteins"/>
    <property type="match status" value="1"/>
</dbReference>
<dbReference type="InterPro" id="IPR008972">
    <property type="entry name" value="Cupredoxin"/>
</dbReference>
<dbReference type="InterPro" id="IPR041846">
    <property type="entry name" value="ENL_dom"/>
</dbReference>
<dbReference type="InterPro" id="IPR039391">
    <property type="entry name" value="Phytocyanin-like"/>
</dbReference>
<dbReference type="InterPro" id="IPR003245">
    <property type="entry name" value="Phytocyanin_dom"/>
</dbReference>
<dbReference type="PANTHER" id="PTHR33021">
    <property type="entry name" value="BLUE COPPER PROTEIN"/>
    <property type="match status" value="1"/>
</dbReference>
<dbReference type="PANTHER" id="PTHR33021:SF185">
    <property type="entry name" value="EARLY NODULIN-LIKE PROTEIN 3-RELATED"/>
    <property type="match status" value="1"/>
</dbReference>
<dbReference type="Pfam" id="PF02298">
    <property type="entry name" value="Cu_bind_like"/>
    <property type="match status" value="1"/>
</dbReference>
<dbReference type="SUPFAM" id="SSF49503">
    <property type="entry name" value="Cupredoxins"/>
    <property type="match status" value="1"/>
</dbReference>
<dbReference type="PROSITE" id="PS51485">
    <property type="entry name" value="PHYTOCYANIN"/>
    <property type="match status" value="1"/>
</dbReference>
<organism>
    <name type="scientific">Arabidopsis thaliana</name>
    <name type="common">Mouse-ear cress</name>
    <dbReference type="NCBI Taxonomy" id="3702"/>
    <lineage>
        <taxon>Eukaryota</taxon>
        <taxon>Viridiplantae</taxon>
        <taxon>Streptophyta</taxon>
        <taxon>Embryophyta</taxon>
        <taxon>Tracheophyta</taxon>
        <taxon>Spermatophyta</taxon>
        <taxon>Magnoliopsida</taxon>
        <taxon>eudicotyledons</taxon>
        <taxon>Gunneridae</taxon>
        <taxon>Pentapetalae</taxon>
        <taxon>rosids</taxon>
        <taxon>malvids</taxon>
        <taxon>Brassicales</taxon>
        <taxon>Brassicaceae</taxon>
        <taxon>Camelineae</taxon>
        <taxon>Arabidopsis</taxon>
    </lineage>
</organism>
<proteinExistence type="evidence at transcript level"/>
<accession>F4JL85</accession>
<accession>O49444</accession>
<evidence type="ECO:0000255" key="1"/>
<evidence type="ECO:0000255" key="2">
    <source>
        <dbReference type="PROSITE-ProRule" id="PRU00498"/>
    </source>
</evidence>
<evidence type="ECO:0000255" key="3">
    <source>
        <dbReference type="PROSITE-ProRule" id="PRU00818"/>
    </source>
</evidence>
<evidence type="ECO:0000256" key="4">
    <source>
        <dbReference type="SAM" id="MobiDB-lite"/>
    </source>
</evidence>
<evidence type="ECO:0000269" key="5">
    <source>
    </source>
</evidence>
<evidence type="ECO:0000303" key="6">
    <source>
    </source>
</evidence>
<evidence type="ECO:0000303" key="7">
    <source>
    </source>
</evidence>
<evidence type="ECO:0000305" key="8"/>
<evidence type="ECO:0000312" key="9">
    <source>
        <dbReference type="Araport" id="AT4G28365"/>
    </source>
</evidence>
<evidence type="ECO:0000312" key="10">
    <source>
        <dbReference type="EMBL" id="CAA16874.2"/>
    </source>
</evidence>
<name>ENL03_ARATH</name>
<comment type="function">
    <text evidence="7">May act as a carbohydrate transporter.</text>
</comment>
<comment type="subcellular location">
    <subcellularLocation>
        <location evidence="1">Cell membrane</location>
        <topology evidence="1">Lipid-anchor</topology>
        <topology evidence="1">GPI-anchor</topology>
    </subcellularLocation>
</comment>
<comment type="tissue specificity">
    <text evidence="5">Confined to flowers.</text>
</comment>
<comment type="similarity">
    <text evidence="8">Belongs to the early nodulin-like (ENODL) family.</text>
</comment>
<comment type="sequence caution" evidence="8">
    <conflict type="erroneous gene model prediction">
        <sequence resource="EMBL-CDS" id="CAA16874"/>
    </conflict>
</comment>
<comment type="sequence caution" evidence="8">
    <conflict type="erroneous gene model prediction">
        <sequence resource="EMBL-CDS" id="CAB79638"/>
    </conflict>
</comment>